<dbReference type="EC" id="2.3.2.23"/>
<dbReference type="EC" id="2.3.2.24"/>
<dbReference type="EMBL" id="BC102425">
    <property type="protein sequence ID" value="AAI02426.1"/>
    <property type="molecule type" value="mRNA"/>
</dbReference>
<dbReference type="RefSeq" id="NP_001068603.1">
    <property type="nucleotide sequence ID" value="NM_001075135.1"/>
</dbReference>
<dbReference type="SMR" id="Q3ZCF7"/>
<dbReference type="FunCoup" id="Q3ZCF7">
    <property type="interactions" value="949"/>
</dbReference>
<dbReference type="STRING" id="9913.ENSBTAP00000063578"/>
<dbReference type="GeneID" id="326583"/>
<dbReference type="KEGG" id="bta:326583"/>
<dbReference type="CTD" id="7323"/>
<dbReference type="InParanoid" id="Q3ZCF7"/>
<dbReference type="OrthoDB" id="7851174at2759"/>
<dbReference type="UniPathway" id="UPA00143"/>
<dbReference type="Proteomes" id="UP000009136">
    <property type="component" value="Unplaced"/>
</dbReference>
<dbReference type="GO" id="GO:0010008">
    <property type="term" value="C:endosome membrane"/>
    <property type="evidence" value="ECO:0007669"/>
    <property type="project" value="UniProtKB-SubCell"/>
</dbReference>
<dbReference type="GO" id="GO:0005634">
    <property type="term" value="C:nucleus"/>
    <property type="evidence" value="ECO:0000318"/>
    <property type="project" value="GO_Central"/>
</dbReference>
<dbReference type="GO" id="GO:0005886">
    <property type="term" value="C:plasma membrane"/>
    <property type="evidence" value="ECO:0007669"/>
    <property type="project" value="UniProtKB-SubCell"/>
</dbReference>
<dbReference type="GO" id="GO:0005524">
    <property type="term" value="F:ATP binding"/>
    <property type="evidence" value="ECO:0007669"/>
    <property type="project" value="UniProtKB-KW"/>
</dbReference>
<dbReference type="GO" id="GO:0061631">
    <property type="term" value="F:ubiquitin conjugating enzyme activity"/>
    <property type="evidence" value="ECO:0000250"/>
    <property type="project" value="UniProtKB"/>
</dbReference>
<dbReference type="GO" id="GO:0004842">
    <property type="term" value="F:ubiquitin-protein transferase activity"/>
    <property type="evidence" value="ECO:0000250"/>
    <property type="project" value="UniProtKB"/>
</dbReference>
<dbReference type="GO" id="GO:0006915">
    <property type="term" value="P:apoptotic process"/>
    <property type="evidence" value="ECO:0007669"/>
    <property type="project" value="UniProtKB-KW"/>
</dbReference>
<dbReference type="GO" id="GO:0006281">
    <property type="term" value="P:DNA repair"/>
    <property type="evidence" value="ECO:0007669"/>
    <property type="project" value="UniProtKB-KW"/>
</dbReference>
<dbReference type="GO" id="GO:0070979">
    <property type="term" value="P:protein K11-linked ubiquitination"/>
    <property type="evidence" value="ECO:0000250"/>
    <property type="project" value="UniProtKB"/>
</dbReference>
<dbReference type="GO" id="GO:0070936">
    <property type="term" value="P:protein K48-linked ubiquitination"/>
    <property type="evidence" value="ECO:0000250"/>
    <property type="project" value="UniProtKB"/>
</dbReference>
<dbReference type="GO" id="GO:0085020">
    <property type="term" value="P:protein K6-linked ubiquitination"/>
    <property type="evidence" value="ECO:0000250"/>
    <property type="project" value="UniProtKB"/>
</dbReference>
<dbReference type="GO" id="GO:0006511">
    <property type="term" value="P:ubiquitin-dependent protein catabolic process"/>
    <property type="evidence" value="ECO:0000318"/>
    <property type="project" value="GO_Central"/>
</dbReference>
<dbReference type="CDD" id="cd23792">
    <property type="entry name" value="UBCc_UBE2D"/>
    <property type="match status" value="1"/>
</dbReference>
<dbReference type="FunFam" id="3.10.110.10:FF:000101">
    <property type="entry name" value="Ubiquitin-conjugating enzyme E2 D2"/>
    <property type="match status" value="1"/>
</dbReference>
<dbReference type="Gene3D" id="3.10.110.10">
    <property type="entry name" value="Ubiquitin Conjugating Enzyme"/>
    <property type="match status" value="1"/>
</dbReference>
<dbReference type="InterPro" id="IPR000608">
    <property type="entry name" value="UBQ-conjugat_E2_core"/>
</dbReference>
<dbReference type="InterPro" id="IPR016135">
    <property type="entry name" value="UBQ-conjugating_enzyme/RWD"/>
</dbReference>
<dbReference type="PANTHER" id="PTHR24068">
    <property type="entry name" value="UBIQUITIN-CONJUGATING ENZYME E2"/>
    <property type="match status" value="1"/>
</dbReference>
<dbReference type="Pfam" id="PF00179">
    <property type="entry name" value="UQ_con"/>
    <property type="match status" value="1"/>
</dbReference>
<dbReference type="SMART" id="SM00212">
    <property type="entry name" value="UBCc"/>
    <property type="match status" value="1"/>
</dbReference>
<dbReference type="SUPFAM" id="SSF54495">
    <property type="entry name" value="UBC-like"/>
    <property type="match status" value="1"/>
</dbReference>
<dbReference type="PROSITE" id="PS50127">
    <property type="entry name" value="UBC_2"/>
    <property type="match status" value="1"/>
</dbReference>
<sequence length="147" mass="16745">MALKRINKELSDLARDPPAQCSAGPVGDDMFHWQATIMGPNDSPYQGGVFFLTIHFPTDYPFKPPKVAFTTRIYHPNINSNDSICLDILRSQWSPALTISKVLLSICSLLCDPNPDDPLVPEIARIYKTDRDKYNRISREWTQKYAM</sequence>
<feature type="chain" id="PRO_0000245035" description="Ubiquitin-conjugating enzyme E2 D3">
    <location>
        <begin position="1"/>
        <end position="147"/>
    </location>
</feature>
<feature type="domain" description="UBC core" evidence="3">
    <location>
        <begin position="1"/>
        <end position="147"/>
    </location>
</feature>
<feature type="active site" description="Glycyl thioester intermediate" evidence="3">
    <location>
        <position position="85"/>
    </location>
</feature>
<feature type="disulfide bond" evidence="1">
    <location>
        <begin position="21"/>
        <end position="107"/>
    </location>
</feature>
<comment type="function">
    <text evidence="1">Accepts ubiquitin from the E1 complex and catalyzes its covalent attachment to other proteins. In vitro catalyzes 'Lys-11'-, as well as 'Lys-48'-linked polyubiquitination. Cooperates with the E2 CDC34 and the SCF(FBXW11) E3 ligase complex for the polyubiquitination of NFKBIA leading to its subsequent proteasomal degradation. Acts as an initiator E2, priming the phosphorylated NFKBIA target at positions 'Lys-21' and/or 'Lys-22' with a monoubiquitin. Ubiquitin chain elongation is then performed by CDC34, building ubiquitin chains from the UBE2D3-primed NFKBIA-linked ubiquitin. Also acts as an initiator E2, in conjunction with RNF8, for the priming of PCNA. Monoubiquitination of PCNA, and its subsequent polyubiquitination, are essential events in the operation of the DNA damage tolerance (DDT) pathway that is activated after DNA damage caused by UV or chemical agents during S-phase. Associates with the BRCA1/BARD1 E3 ligase complex to perform ubiquitination at DNA damage sites following ionizing radiation leading to DNA repair. Targets DAPK3 for ubiquitination which influences promyelocytic leukemia protein nuclear body (PML-NB) formation in the nucleus. In conjunction with the MDM2 and TOPORS E3 ligases, functions ubiquitination of p53/TP53. In conjunction with the CBL E3 ligase, targets EGFR for polyubiquitination at the plasma membrane as well as during its internalization and transport on endosomes. In conjunction with the STUB1 E3 quality control E3 ligase, ubiquitinates unfolded proteins to catalyze their immediate destruction. Together with RNF135, catalyzes the viral RNA-dependent 'Lys-63'-linked polyubiquitination of RIGI to activate the downstream signaling pathway that leads to interferon beta production. Together with ZNF598, catalyzes ubiquitination of 40S ribosomal proteins in response to ribosome collisions. In cooperation with the GATOR2 complex, catalyzes 'Lys-6'-linked ubiquitination of NPRL2.</text>
</comment>
<comment type="catalytic activity">
    <reaction evidence="1 3">
        <text>S-ubiquitinyl-[E1 ubiquitin-activating enzyme]-L-cysteine + [E2 ubiquitin-conjugating enzyme]-L-cysteine = [E1 ubiquitin-activating enzyme]-L-cysteine + S-ubiquitinyl-[E2 ubiquitin-conjugating enzyme]-L-cysteine.</text>
        <dbReference type="EC" id="2.3.2.23"/>
    </reaction>
</comment>
<comment type="catalytic activity">
    <reaction evidence="1">
        <text>S-ubiquitinyl-[E1 ubiquitin-activating enzyme]-L-cysteine + [acceptor protein]-L-lysine = [E1 ubiquitin-activating enzyme]-L-cysteine + N(6)-monoubiquitinyl-[acceptor protein]-L-lysine.</text>
        <dbReference type="EC" id="2.3.2.24"/>
    </reaction>
</comment>
<comment type="pathway">
    <text evidence="3">Protein modification; protein ubiquitination.</text>
</comment>
<comment type="subunit">
    <text evidence="1">Interacts with SCF (SKP1-CUL1-F-box protein) E3 ubiquitin ligase complex; when Cullin is neddylated, the interaction between the E2 and the SCF complex is strengthened. Interacts with DAPK3. Interacts with BRCA1; the DNA damage checkpoint promotes the association with BRCA1 after ionizing radiation. Interacts non-covalently with ubiquitin. Interacts with E3 ubiquitin-protein ligase CBLC. Interacts with UBTD1 (By similarity). Interacts with RIGI and RNF135; involved in RIGI ubiquitination and activation (By similarity).</text>
</comment>
<comment type="subcellular location">
    <subcellularLocation>
        <location evidence="1">Cell membrane</location>
        <topology evidence="1">Peripheral membrane protein</topology>
    </subcellularLocation>
    <subcellularLocation>
        <location evidence="1">Endosome membrane</location>
        <topology evidence="1">Peripheral membrane protein</topology>
    </subcellularLocation>
</comment>
<comment type="PTM">
    <text evidence="2">Phosphorylated by AURKB.</text>
</comment>
<comment type="similarity">
    <text evidence="3">Belongs to the ubiquitin-conjugating enzyme family.</text>
</comment>
<keyword id="KW-0053">Apoptosis</keyword>
<keyword id="KW-0067">ATP-binding</keyword>
<keyword id="KW-1003">Cell membrane</keyword>
<keyword id="KW-1015">Disulfide bond</keyword>
<keyword id="KW-0227">DNA damage</keyword>
<keyword id="KW-0234">DNA repair</keyword>
<keyword id="KW-0967">Endosome</keyword>
<keyword id="KW-0472">Membrane</keyword>
<keyword id="KW-0547">Nucleotide-binding</keyword>
<keyword id="KW-0597">Phosphoprotein</keyword>
<keyword id="KW-1185">Reference proteome</keyword>
<keyword id="KW-0808">Transferase</keyword>
<keyword id="KW-0833">Ubl conjugation pathway</keyword>
<organism>
    <name type="scientific">Bos taurus</name>
    <name type="common">Bovine</name>
    <dbReference type="NCBI Taxonomy" id="9913"/>
    <lineage>
        <taxon>Eukaryota</taxon>
        <taxon>Metazoa</taxon>
        <taxon>Chordata</taxon>
        <taxon>Craniata</taxon>
        <taxon>Vertebrata</taxon>
        <taxon>Euteleostomi</taxon>
        <taxon>Mammalia</taxon>
        <taxon>Eutheria</taxon>
        <taxon>Laurasiatheria</taxon>
        <taxon>Artiodactyla</taxon>
        <taxon>Ruminantia</taxon>
        <taxon>Pecora</taxon>
        <taxon>Bovidae</taxon>
        <taxon>Bovinae</taxon>
        <taxon>Bos</taxon>
    </lineage>
</organism>
<reference key="1">
    <citation type="submission" date="2005-08" db="EMBL/GenBank/DDBJ databases">
        <authorList>
            <consortium name="NIH - Mammalian Gene Collection (MGC) project"/>
        </authorList>
    </citation>
    <scope>NUCLEOTIDE SEQUENCE [LARGE SCALE MRNA]</scope>
    <source>
        <strain>Crossbred X Angus</strain>
        <tissue>Ileum</tissue>
    </source>
</reference>
<gene>
    <name type="primary">UBE2D3</name>
</gene>
<proteinExistence type="evidence at transcript level"/>
<evidence type="ECO:0000250" key="1">
    <source>
        <dbReference type="UniProtKB" id="P61077"/>
    </source>
</evidence>
<evidence type="ECO:0000250" key="2">
    <source>
        <dbReference type="UniProtKB" id="P61079"/>
    </source>
</evidence>
<evidence type="ECO:0000255" key="3">
    <source>
        <dbReference type="PROSITE-ProRule" id="PRU00388"/>
    </source>
</evidence>
<accession>Q3ZCF7</accession>
<name>UB2D3_BOVIN</name>
<protein>
    <recommendedName>
        <fullName>Ubiquitin-conjugating enzyme E2 D3</fullName>
        <ecNumber>2.3.2.23</ecNumber>
    </recommendedName>
    <alternativeName>
        <fullName>(E3-independent) E2 ubiquitin-conjugating enzyme D3</fullName>
        <ecNumber>2.3.2.24</ecNumber>
    </alternativeName>
    <alternativeName>
        <fullName>E2 ubiquitin-conjugating enzyme D3</fullName>
    </alternativeName>
    <alternativeName>
        <fullName>Ubiquitin carrier protein D3</fullName>
    </alternativeName>
    <alternativeName>
        <fullName>Ubiquitin-protein ligase D3</fullName>
    </alternativeName>
</protein>